<protein>
    <recommendedName>
        <fullName>Transmembrane protein 229b</fullName>
    </recommendedName>
</protein>
<name>T229B_XENTR</name>
<sequence length="168" mass="19788">MAPPEPLTALSRWYLYAIHGYFCEVMFTAAWDFVVNYNWKFPGVTSVWALFIYGTSILIVEKMYLYLKDKCNILIRCLIYTLWTYIWEFSTGLILRQFNACPWDYSQFDFDFMGLITLEYAIPWFCASFIMEQLVIRNTLRLRFDEHAEPGSPVMSTVSMANGHVKCN</sequence>
<dbReference type="EMBL" id="BC121384">
    <property type="protein sequence ID" value="AAI21385.1"/>
    <property type="molecule type" value="mRNA"/>
</dbReference>
<dbReference type="RefSeq" id="NP_001072319.2">
    <property type="nucleotide sequence ID" value="NM_001078851.2"/>
</dbReference>
<dbReference type="RefSeq" id="NP_001231876.1">
    <property type="nucleotide sequence ID" value="NM_001244947.1"/>
</dbReference>
<dbReference type="FunCoup" id="Q0V9V2">
    <property type="interactions" value="26"/>
</dbReference>
<dbReference type="PaxDb" id="8364-ENSXETP00000008483"/>
<dbReference type="DNASU" id="779772"/>
<dbReference type="GeneID" id="779772"/>
<dbReference type="KEGG" id="xtr:779772"/>
<dbReference type="CTD" id="161145"/>
<dbReference type="eggNOG" id="ENOG502QTFF">
    <property type="taxonomic scope" value="Eukaryota"/>
</dbReference>
<dbReference type="HOGENOM" id="CLU_102218_0_0_1"/>
<dbReference type="InParanoid" id="Q0V9V2"/>
<dbReference type="OrthoDB" id="5946847at2759"/>
<dbReference type="TreeFam" id="TF336481"/>
<dbReference type="Proteomes" id="UP000008143">
    <property type="component" value="Chromosome 8"/>
</dbReference>
<dbReference type="GO" id="GO:0016020">
    <property type="term" value="C:membrane"/>
    <property type="evidence" value="ECO:0007669"/>
    <property type="project" value="UniProtKB-SubCell"/>
</dbReference>
<dbReference type="InterPro" id="IPR010540">
    <property type="entry name" value="CmpB_TMEM229"/>
</dbReference>
<dbReference type="PANTHER" id="PTHR31746">
    <property type="entry name" value="TRANSMEMBRANE PROTEIN 229 FAMILY MEMBER"/>
    <property type="match status" value="1"/>
</dbReference>
<dbReference type="PANTHER" id="PTHR31746:SF3">
    <property type="entry name" value="TRANSMEMBRANE PROTEIN 229B"/>
    <property type="match status" value="1"/>
</dbReference>
<dbReference type="Pfam" id="PF06541">
    <property type="entry name" value="ABC_trans_CmpB"/>
    <property type="match status" value="1"/>
</dbReference>
<feature type="chain" id="PRO_0000359902" description="Transmembrane protein 229b">
    <location>
        <begin position="1"/>
        <end position="168"/>
    </location>
</feature>
<feature type="topological domain" description="Cytoplasmic" evidence="1">
    <location>
        <begin position="1"/>
        <end position="14"/>
    </location>
</feature>
<feature type="transmembrane region" description="Helical" evidence="1">
    <location>
        <begin position="15"/>
        <end position="35"/>
    </location>
</feature>
<feature type="topological domain" description="Extracellular" evidence="1">
    <location>
        <begin position="36"/>
        <end position="40"/>
    </location>
</feature>
<feature type="transmembrane region" description="Helical" evidence="1">
    <location>
        <begin position="41"/>
        <end position="61"/>
    </location>
</feature>
<feature type="topological domain" description="Cytoplasmic" evidence="1">
    <location>
        <begin position="62"/>
        <end position="72"/>
    </location>
</feature>
<feature type="transmembrane region" description="Helical" evidence="1">
    <location>
        <begin position="73"/>
        <end position="93"/>
    </location>
</feature>
<feature type="topological domain" description="Extracellular" evidence="1">
    <location>
        <begin position="94"/>
        <end position="109"/>
    </location>
</feature>
<feature type="transmembrane region" description="Helical" evidence="1">
    <location>
        <begin position="110"/>
        <end position="130"/>
    </location>
</feature>
<feature type="topological domain" description="Cytoplasmic" evidence="1">
    <location>
        <begin position="131"/>
        <end position="168"/>
    </location>
</feature>
<organism>
    <name type="scientific">Xenopus tropicalis</name>
    <name type="common">Western clawed frog</name>
    <name type="synonym">Silurana tropicalis</name>
    <dbReference type="NCBI Taxonomy" id="8364"/>
    <lineage>
        <taxon>Eukaryota</taxon>
        <taxon>Metazoa</taxon>
        <taxon>Chordata</taxon>
        <taxon>Craniata</taxon>
        <taxon>Vertebrata</taxon>
        <taxon>Euteleostomi</taxon>
        <taxon>Amphibia</taxon>
        <taxon>Batrachia</taxon>
        <taxon>Anura</taxon>
        <taxon>Pipoidea</taxon>
        <taxon>Pipidae</taxon>
        <taxon>Xenopodinae</taxon>
        <taxon>Xenopus</taxon>
        <taxon>Silurana</taxon>
    </lineage>
</organism>
<proteinExistence type="evidence at transcript level"/>
<gene>
    <name type="primary">tmem229b</name>
</gene>
<evidence type="ECO:0000255" key="1"/>
<evidence type="ECO:0000305" key="2"/>
<accession>Q0V9V2</accession>
<comment type="subcellular location">
    <subcellularLocation>
        <location evidence="2">Membrane</location>
        <topology evidence="2">Multi-pass membrane protein</topology>
    </subcellularLocation>
</comment>
<comment type="similarity">
    <text evidence="2">Belongs to the TMEM229 family.</text>
</comment>
<reference key="1">
    <citation type="submission" date="2006-08" db="EMBL/GenBank/DDBJ databases">
        <authorList>
            <consortium name="NIH - Xenopus Gene Collection (XGC) project"/>
        </authorList>
    </citation>
    <scope>NUCLEOTIDE SEQUENCE [LARGE SCALE MRNA]</scope>
    <source>
        <tissue>Brain</tissue>
    </source>
</reference>
<keyword id="KW-0472">Membrane</keyword>
<keyword id="KW-1185">Reference proteome</keyword>
<keyword id="KW-0812">Transmembrane</keyword>
<keyword id="KW-1133">Transmembrane helix</keyword>